<dbReference type="EC" id="1.15.1.1" evidence="2"/>
<dbReference type="EMBL" id="AB087272">
    <property type="protein sequence ID" value="BAC20351.1"/>
    <property type="molecule type" value="mRNA"/>
</dbReference>
<dbReference type="SMR" id="Q8HXP9"/>
<dbReference type="Proteomes" id="UP000504640">
    <property type="component" value="Unplaced"/>
</dbReference>
<dbReference type="GO" id="GO:0005737">
    <property type="term" value="C:cytoplasm"/>
    <property type="evidence" value="ECO:0000250"/>
    <property type="project" value="UniProtKB"/>
</dbReference>
<dbReference type="GO" id="GO:0031410">
    <property type="term" value="C:cytoplasmic vesicle"/>
    <property type="evidence" value="ECO:0000250"/>
    <property type="project" value="UniProtKB"/>
</dbReference>
<dbReference type="GO" id="GO:0005829">
    <property type="term" value="C:cytosol"/>
    <property type="evidence" value="ECO:0000250"/>
    <property type="project" value="UniProtKB"/>
</dbReference>
<dbReference type="GO" id="GO:0032839">
    <property type="term" value="C:dendrite cytoplasm"/>
    <property type="evidence" value="ECO:0000250"/>
    <property type="project" value="UniProtKB"/>
</dbReference>
<dbReference type="GO" id="GO:0005739">
    <property type="term" value="C:mitochondrion"/>
    <property type="evidence" value="ECO:0000250"/>
    <property type="project" value="UniProtKB"/>
</dbReference>
<dbReference type="GO" id="GO:0043025">
    <property type="term" value="C:neuronal cell body"/>
    <property type="evidence" value="ECO:0000250"/>
    <property type="project" value="UniProtKB"/>
</dbReference>
<dbReference type="GO" id="GO:0005634">
    <property type="term" value="C:nucleus"/>
    <property type="evidence" value="ECO:0000250"/>
    <property type="project" value="UniProtKB"/>
</dbReference>
<dbReference type="GO" id="GO:0032991">
    <property type="term" value="C:protein-containing complex"/>
    <property type="evidence" value="ECO:0000250"/>
    <property type="project" value="UniProtKB"/>
</dbReference>
<dbReference type="GO" id="GO:0005507">
    <property type="term" value="F:copper ion binding"/>
    <property type="evidence" value="ECO:0000250"/>
    <property type="project" value="UniProtKB"/>
</dbReference>
<dbReference type="GO" id="GO:0030346">
    <property type="term" value="F:protein phosphatase 2B binding"/>
    <property type="evidence" value="ECO:0000250"/>
    <property type="project" value="UniProtKB"/>
</dbReference>
<dbReference type="GO" id="GO:0051087">
    <property type="term" value="F:protein-folding chaperone binding"/>
    <property type="evidence" value="ECO:0000250"/>
    <property type="project" value="UniProtKB"/>
</dbReference>
<dbReference type="GO" id="GO:0004784">
    <property type="term" value="F:superoxide dismutase activity"/>
    <property type="evidence" value="ECO:0000250"/>
    <property type="project" value="UniProtKB"/>
</dbReference>
<dbReference type="GO" id="GO:0008270">
    <property type="term" value="F:zinc ion binding"/>
    <property type="evidence" value="ECO:0000250"/>
    <property type="project" value="UniProtKB"/>
</dbReference>
<dbReference type="GO" id="GO:0060088">
    <property type="term" value="P:auditory receptor cell stereocilium organization"/>
    <property type="evidence" value="ECO:0000250"/>
    <property type="project" value="UniProtKB"/>
</dbReference>
<dbReference type="GO" id="GO:0007566">
    <property type="term" value="P:embryo implantation"/>
    <property type="evidence" value="ECO:0000250"/>
    <property type="project" value="UniProtKB"/>
</dbReference>
<dbReference type="GO" id="GO:0006749">
    <property type="term" value="P:glutathione metabolic process"/>
    <property type="evidence" value="ECO:0000250"/>
    <property type="project" value="UniProtKB"/>
</dbReference>
<dbReference type="GO" id="GO:0060047">
    <property type="term" value="P:heart contraction"/>
    <property type="evidence" value="ECO:0000250"/>
    <property type="project" value="UniProtKB"/>
</dbReference>
<dbReference type="GO" id="GO:0050665">
    <property type="term" value="P:hydrogen peroxide biosynthetic process"/>
    <property type="evidence" value="ECO:0000250"/>
    <property type="project" value="UniProtKB"/>
</dbReference>
<dbReference type="GO" id="GO:0006879">
    <property type="term" value="P:intracellular iron ion homeostasis"/>
    <property type="evidence" value="ECO:0000250"/>
    <property type="project" value="UniProtKB"/>
</dbReference>
<dbReference type="GO" id="GO:0007626">
    <property type="term" value="P:locomotory behavior"/>
    <property type="evidence" value="ECO:0000250"/>
    <property type="project" value="UniProtKB"/>
</dbReference>
<dbReference type="GO" id="GO:0046716">
    <property type="term" value="P:muscle cell cellular homeostasis"/>
    <property type="evidence" value="ECO:0000250"/>
    <property type="project" value="UniProtKB"/>
</dbReference>
<dbReference type="GO" id="GO:0002262">
    <property type="term" value="P:myeloid cell homeostasis"/>
    <property type="evidence" value="ECO:0000250"/>
    <property type="project" value="UniProtKB"/>
</dbReference>
<dbReference type="GO" id="GO:0043524">
    <property type="term" value="P:negative regulation of neuron apoptotic process"/>
    <property type="evidence" value="ECO:0000250"/>
    <property type="project" value="UniProtKB"/>
</dbReference>
<dbReference type="GO" id="GO:0060052">
    <property type="term" value="P:neurofilament cytoskeleton organization"/>
    <property type="evidence" value="ECO:0000250"/>
    <property type="project" value="UniProtKB"/>
</dbReference>
<dbReference type="GO" id="GO:0001541">
    <property type="term" value="P:ovarian follicle development"/>
    <property type="evidence" value="ECO:0000250"/>
    <property type="project" value="UniProtKB"/>
</dbReference>
<dbReference type="GO" id="GO:0032287">
    <property type="term" value="P:peripheral nervous system myelin maintenance"/>
    <property type="evidence" value="ECO:0000250"/>
    <property type="project" value="UniProtKB"/>
</dbReference>
<dbReference type="GO" id="GO:0001819">
    <property type="term" value="P:positive regulation of cytokine production"/>
    <property type="evidence" value="ECO:0000250"/>
    <property type="project" value="UniProtKB"/>
</dbReference>
<dbReference type="GO" id="GO:0043410">
    <property type="term" value="P:positive regulation of MAPK cascade"/>
    <property type="evidence" value="ECO:0000250"/>
    <property type="project" value="UniProtKB"/>
</dbReference>
<dbReference type="GO" id="GO:0072593">
    <property type="term" value="P:reactive oxygen species metabolic process"/>
    <property type="evidence" value="ECO:0000250"/>
    <property type="project" value="UniProtKB"/>
</dbReference>
<dbReference type="GO" id="GO:0008217">
    <property type="term" value="P:regulation of blood pressure"/>
    <property type="evidence" value="ECO:0000250"/>
    <property type="project" value="UniProtKB"/>
</dbReference>
<dbReference type="GO" id="GO:0051881">
    <property type="term" value="P:regulation of mitochondrial membrane potential"/>
    <property type="evidence" value="ECO:0000250"/>
    <property type="project" value="UniProtKB"/>
</dbReference>
<dbReference type="GO" id="GO:0040014">
    <property type="term" value="P:regulation of multicellular organism growth"/>
    <property type="evidence" value="ECO:0000250"/>
    <property type="project" value="UniProtKB"/>
</dbReference>
<dbReference type="GO" id="GO:0060087">
    <property type="term" value="P:relaxation of vascular associated smooth muscle"/>
    <property type="evidence" value="ECO:0000250"/>
    <property type="project" value="UniProtKB"/>
</dbReference>
<dbReference type="GO" id="GO:0019430">
    <property type="term" value="P:removal of superoxide radicals"/>
    <property type="evidence" value="ECO:0000250"/>
    <property type="project" value="UniProtKB"/>
</dbReference>
<dbReference type="GO" id="GO:0048678">
    <property type="term" value="P:response to axon injury"/>
    <property type="evidence" value="ECO:0000250"/>
    <property type="project" value="UniProtKB"/>
</dbReference>
<dbReference type="GO" id="GO:0045471">
    <property type="term" value="P:response to ethanol"/>
    <property type="evidence" value="ECO:0000250"/>
    <property type="project" value="UniProtKB"/>
</dbReference>
<dbReference type="GO" id="GO:0009408">
    <property type="term" value="P:response to heat"/>
    <property type="evidence" value="ECO:0000250"/>
    <property type="project" value="UniProtKB"/>
</dbReference>
<dbReference type="GO" id="GO:0042542">
    <property type="term" value="P:response to hydrogen peroxide"/>
    <property type="evidence" value="ECO:0000250"/>
    <property type="project" value="UniProtKB"/>
</dbReference>
<dbReference type="GO" id="GO:0000303">
    <property type="term" value="P:response to superoxide"/>
    <property type="evidence" value="ECO:0000250"/>
    <property type="project" value="UniProtKB"/>
</dbReference>
<dbReference type="GO" id="GO:0001895">
    <property type="term" value="P:retina homeostasis"/>
    <property type="evidence" value="ECO:0000250"/>
    <property type="project" value="UniProtKB"/>
</dbReference>
<dbReference type="GO" id="GO:0007605">
    <property type="term" value="P:sensory perception of sound"/>
    <property type="evidence" value="ECO:0000250"/>
    <property type="project" value="UniProtKB"/>
</dbReference>
<dbReference type="GO" id="GO:0007283">
    <property type="term" value="P:spermatogenesis"/>
    <property type="evidence" value="ECO:0000250"/>
    <property type="project" value="UniProtKB"/>
</dbReference>
<dbReference type="GO" id="GO:0006801">
    <property type="term" value="P:superoxide metabolic process"/>
    <property type="evidence" value="ECO:0000250"/>
    <property type="project" value="UniProtKB"/>
</dbReference>
<dbReference type="GO" id="GO:0019226">
    <property type="term" value="P:transmission of nerve impulse"/>
    <property type="evidence" value="ECO:0000250"/>
    <property type="project" value="UniProtKB"/>
</dbReference>
<dbReference type="CDD" id="cd00305">
    <property type="entry name" value="Cu-Zn_Superoxide_Dismutase"/>
    <property type="match status" value="1"/>
</dbReference>
<dbReference type="FunFam" id="2.60.40.200:FF:000001">
    <property type="entry name" value="Superoxide dismutase [Cu-Zn]"/>
    <property type="match status" value="1"/>
</dbReference>
<dbReference type="Gene3D" id="2.60.40.200">
    <property type="entry name" value="Superoxide dismutase, copper/zinc binding domain"/>
    <property type="match status" value="1"/>
</dbReference>
<dbReference type="InterPro" id="IPR036423">
    <property type="entry name" value="SOD-like_Cu/Zn_dom_sf"/>
</dbReference>
<dbReference type="InterPro" id="IPR024134">
    <property type="entry name" value="SOD_Cu/Zn_/chaperone"/>
</dbReference>
<dbReference type="InterPro" id="IPR018152">
    <property type="entry name" value="SOD_Cu/Zn_BS"/>
</dbReference>
<dbReference type="InterPro" id="IPR001424">
    <property type="entry name" value="SOD_Cu_Zn_dom"/>
</dbReference>
<dbReference type="PANTHER" id="PTHR10003">
    <property type="entry name" value="SUPEROXIDE DISMUTASE CU-ZN -RELATED"/>
    <property type="match status" value="1"/>
</dbReference>
<dbReference type="Pfam" id="PF00080">
    <property type="entry name" value="Sod_Cu"/>
    <property type="match status" value="1"/>
</dbReference>
<dbReference type="PRINTS" id="PR00068">
    <property type="entry name" value="CUZNDISMTASE"/>
</dbReference>
<dbReference type="SUPFAM" id="SSF49329">
    <property type="entry name" value="Cu,Zn superoxide dismutase-like"/>
    <property type="match status" value="1"/>
</dbReference>
<dbReference type="PROSITE" id="PS00087">
    <property type="entry name" value="SOD_CU_ZN_1"/>
    <property type="match status" value="1"/>
</dbReference>
<dbReference type="PROSITE" id="PS00332">
    <property type="entry name" value="SOD_CU_ZN_2"/>
    <property type="match status" value="1"/>
</dbReference>
<proteinExistence type="evidence at transcript level"/>
<protein>
    <recommendedName>
        <fullName evidence="2">Superoxide dismutase [Cu-Zn]</fullName>
        <ecNumber evidence="2">1.15.1.1</ecNumber>
    </recommendedName>
</protein>
<accession>Q8HXP9</accession>
<feature type="initiator methionine" description="Removed" evidence="3">
    <location>
        <position position="1"/>
    </location>
</feature>
<feature type="chain" id="PRO_0000164054" description="Superoxide dismutase [Cu-Zn]">
    <location>
        <begin position="2"/>
        <end position="154"/>
    </location>
</feature>
<feature type="region of interest" description="Disordered" evidence="6">
    <location>
        <begin position="59"/>
        <end position="81"/>
    </location>
</feature>
<feature type="binding site" evidence="1">
    <location>
        <position position="47"/>
    </location>
    <ligand>
        <name>Cu cation</name>
        <dbReference type="ChEBI" id="CHEBI:23378"/>
        <note>catalytic</note>
    </ligand>
</feature>
<feature type="binding site" evidence="1">
    <location>
        <position position="49"/>
    </location>
    <ligand>
        <name>Cu cation</name>
        <dbReference type="ChEBI" id="CHEBI:23378"/>
        <note>catalytic</note>
    </ligand>
</feature>
<feature type="binding site" evidence="1">
    <location>
        <position position="64"/>
    </location>
    <ligand>
        <name>Cu cation</name>
        <dbReference type="ChEBI" id="CHEBI:23378"/>
        <note>catalytic</note>
    </ligand>
</feature>
<feature type="binding site" evidence="1">
    <location>
        <position position="64"/>
    </location>
    <ligand>
        <name>Zn(2+)</name>
        <dbReference type="ChEBI" id="CHEBI:29105"/>
        <note>structural</note>
    </ligand>
</feature>
<feature type="binding site" evidence="1">
    <location>
        <position position="72"/>
    </location>
    <ligand>
        <name>Zn(2+)</name>
        <dbReference type="ChEBI" id="CHEBI:29105"/>
        <note>structural</note>
    </ligand>
</feature>
<feature type="binding site" evidence="1">
    <location>
        <position position="81"/>
    </location>
    <ligand>
        <name>Zn(2+)</name>
        <dbReference type="ChEBI" id="CHEBI:29105"/>
        <note>structural</note>
    </ligand>
</feature>
<feature type="binding site" evidence="1">
    <location>
        <position position="84"/>
    </location>
    <ligand>
        <name>Zn(2+)</name>
        <dbReference type="ChEBI" id="CHEBI:29105"/>
        <note>structural</note>
    </ligand>
</feature>
<feature type="binding site" evidence="1">
    <location>
        <position position="121"/>
    </location>
    <ligand>
        <name>Cu cation</name>
        <dbReference type="ChEBI" id="CHEBI:23378"/>
        <note>catalytic</note>
    </ligand>
</feature>
<feature type="modified residue" description="N-acetylalanine" evidence="3">
    <location>
        <position position="2"/>
    </location>
</feature>
<feature type="modified residue" description="N6-succinyllysine" evidence="5">
    <location>
        <position position="4"/>
    </location>
</feature>
<feature type="modified residue" description="N6-succinyllysine" evidence="5">
    <location>
        <position position="10"/>
    </location>
</feature>
<feature type="modified residue" description="N6-succinyllysine" evidence="5">
    <location>
        <position position="92"/>
    </location>
</feature>
<feature type="modified residue" description="Phosphoserine" evidence="2">
    <location>
        <position position="99"/>
    </location>
</feature>
<feature type="modified residue" description="Phosphoserine" evidence="2">
    <location>
        <position position="103"/>
    </location>
</feature>
<feature type="modified residue" description="Phosphoserine" evidence="4">
    <location>
        <position position="106"/>
    </location>
</feature>
<feature type="modified residue" description="Phosphoserine" evidence="5">
    <location>
        <position position="108"/>
    </location>
</feature>
<feature type="modified residue" description="N6-acetyllysine; alternate" evidence="2">
    <location>
        <position position="123"/>
    </location>
</feature>
<feature type="modified residue" description="N6-succinyllysine; alternate" evidence="2">
    <location>
        <position position="123"/>
    </location>
</feature>
<feature type="modified residue" description="N6-acetyllysine; alternate" evidence="5">
    <location>
        <position position="137"/>
    </location>
</feature>
<feature type="modified residue" description="N6-succinyllysine; alternate" evidence="5">
    <location>
        <position position="137"/>
    </location>
</feature>
<feature type="lipid moiety-binding region" description="S-palmitoyl cysteine" evidence="1">
    <location>
        <position position="7"/>
    </location>
</feature>
<feature type="disulfide bond" evidence="1">
    <location>
        <begin position="58"/>
        <end position="147"/>
    </location>
</feature>
<sequence length="154" mass="15893">MAMKAVCVLKGDGPVQGTINFEQKESNGPVKVWGSITGLAEGLHGFHVHQFGDNTQGCTSAGPHFNPLSRKHGGPEDEERHVGDLGNVTAGKDGVAKVSIEDSVISLSGDHSIIGRTLVVHEKADDLGKGGNEESTKTGNAGSRLACGVIGIAQ</sequence>
<comment type="function">
    <text>Destroys radicals which are normally produced within the cells and which are toxic to biological systems.</text>
</comment>
<comment type="catalytic activity">
    <reaction>
        <text>2 superoxide + 2 H(+) = H2O2 + O2</text>
        <dbReference type="Rhea" id="RHEA:20696"/>
        <dbReference type="ChEBI" id="CHEBI:15378"/>
        <dbReference type="ChEBI" id="CHEBI:15379"/>
        <dbReference type="ChEBI" id="CHEBI:16240"/>
        <dbReference type="ChEBI" id="CHEBI:18421"/>
        <dbReference type="EC" id="1.15.1.1"/>
    </reaction>
</comment>
<comment type="cofactor">
    <cofactor evidence="1">
        <name>Cu cation</name>
        <dbReference type="ChEBI" id="CHEBI:23378"/>
    </cofactor>
    <text evidence="1">Binds 1 copper ion per subunit.</text>
</comment>
<comment type="cofactor">
    <cofactor evidence="1">
        <name>Zn(2+)</name>
        <dbReference type="ChEBI" id="CHEBI:29105"/>
    </cofactor>
    <text evidence="1">Binds 1 zinc ion per subunit.</text>
</comment>
<comment type="subunit">
    <text evidence="2 5">Homodimer; non-disulfide-linked (By similarity). Heterodimer with SOD1. The heterodimer CCS:SOD1 interacts with SLC31A1; this heterotrimer is Cu(1+)-mediated and its maintenance is regulated through SOD1 activation (By similarity).</text>
</comment>
<comment type="subcellular location">
    <subcellularLocation>
        <location evidence="1">Cytoplasm</location>
    </subcellularLocation>
    <subcellularLocation>
        <location evidence="1">Nucleus</location>
    </subcellularLocation>
</comment>
<comment type="PTM">
    <text evidence="1">Palmitoylation helps nuclear targeting and decreases catalytic activity.</text>
</comment>
<comment type="PTM">
    <text evidence="2">Succinylation, adjacent to copper catalytic site, probably inhibits activity. Desuccinylation by SIRT5 enhances activity.</text>
</comment>
<comment type="similarity">
    <text evidence="7">Belongs to the Cu-Zn superoxide dismutase family.</text>
</comment>
<name>SODC_SAPAP</name>
<keyword id="KW-0007">Acetylation</keyword>
<keyword id="KW-0049">Antioxidant</keyword>
<keyword id="KW-0186">Copper</keyword>
<keyword id="KW-0963">Cytoplasm</keyword>
<keyword id="KW-1015">Disulfide bond</keyword>
<keyword id="KW-0449">Lipoprotein</keyword>
<keyword id="KW-0479">Metal-binding</keyword>
<keyword id="KW-0539">Nucleus</keyword>
<keyword id="KW-0560">Oxidoreductase</keyword>
<keyword id="KW-0564">Palmitate</keyword>
<keyword id="KW-0597">Phosphoprotein</keyword>
<keyword id="KW-1185">Reference proteome</keyword>
<keyword id="KW-0862">Zinc</keyword>
<gene>
    <name evidence="2" type="primary">SOD1</name>
</gene>
<evidence type="ECO:0000250" key="1"/>
<evidence type="ECO:0000250" key="2">
    <source>
        <dbReference type="UniProtKB" id="P00441"/>
    </source>
</evidence>
<evidence type="ECO:0000250" key="3">
    <source>
        <dbReference type="UniProtKB" id="P00442"/>
    </source>
</evidence>
<evidence type="ECO:0000250" key="4">
    <source>
        <dbReference type="UniProtKB" id="P07632"/>
    </source>
</evidence>
<evidence type="ECO:0000250" key="5">
    <source>
        <dbReference type="UniProtKB" id="P08228"/>
    </source>
</evidence>
<evidence type="ECO:0000256" key="6">
    <source>
        <dbReference type="SAM" id="MobiDB-lite"/>
    </source>
</evidence>
<evidence type="ECO:0000305" key="7"/>
<reference key="1">
    <citation type="journal article" date="2002" name="Gene">
        <title>Structure, molecular evolution, and gene expression of primate superoxide dismutases.</title>
        <authorList>
            <person name="Fukuhara R."/>
            <person name="Tezuka T."/>
            <person name="Kageyama T."/>
        </authorList>
    </citation>
    <scope>NUCLEOTIDE SEQUENCE [MRNA]</scope>
</reference>
<organism>
    <name type="scientific">Sapajus apella</name>
    <name type="common">Brown-capped capuchin</name>
    <name type="synonym">Cebus apella</name>
    <dbReference type="NCBI Taxonomy" id="9515"/>
    <lineage>
        <taxon>Eukaryota</taxon>
        <taxon>Metazoa</taxon>
        <taxon>Chordata</taxon>
        <taxon>Craniata</taxon>
        <taxon>Vertebrata</taxon>
        <taxon>Euteleostomi</taxon>
        <taxon>Mammalia</taxon>
        <taxon>Eutheria</taxon>
        <taxon>Euarchontoglires</taxon>
        <taxon>Primates</taxon>
        <taxon>Haplorrhini</taxon>
        <taxon>Platyrrhini</taxon>
        <taxon>Cebidae</taxon>
        <taxon>Cebinae</taxon>
        <taxon>Sapajus</taxon>
    </lineage>
</organism>